<evidence type="ECO:0000255" key="1"/>
<evidence type="ECO:0000256" key="2">
    <source>
        <dbReference type="SAM" id="MobiDB-lite"/>
    </source>
</evidence>
<evidence type="ECO:0000269" key="3">
    <source>
    </source>
</evidence>
<evidence type="ECO:0000269" key="4">
    <source>
    </source>
</evidence>
<sequence length="240" mass="27424">MSGFIKSTLLGLGQDYLEDQYQEFAEQHFQPTRDPFYETNKDGKKHRRRLPYYCTKDESKAWKKVQNKAWLHDKSLCGCCCWTNTIGWAPLLALLPVIGPLLMYWVHDKLIELADDRYKLPAEIKVKMHGNIVIDLLISLVPILGSVFAWLHACSTRNAAIVYNFVGKRALERKQAELMHQKEENEKHSNANTAPPVVGGNKNVNGNRNNSKMYNRPPVTAPPAPAYTRSTNGRPQRGYR</sequence>
<gene>
    <name type="ordered locus">YLR326W</name>
</gene>
<keyword id="KW-0472">Membrane</keyword>
<keyword id="KW-1185">Reference proteome</keyword>
<keyword id="KW-0812">Transmembrane</keyword>
<keyword id="KW-1133">Transmembrane helix</keyword>
<reference key="1">
    <citation type="journal article" date="1997" name="Nature">
        <title>The nucleotide sequence of Saccharomyces cerevisiae chromosome XII.</title>
        <authorList>
            <person name="Johnston M."/>
            <person name="Hillier L.W."/>
            <person name="Riles L."/>
            <person name="Albermann K."/>
            <person name="Andre B."/>
            <person name="Ansorge W."/>
            <person name="Benes V."/>
            <person name="Brueckner M."/>
            <person name="Delius H."/>
            <person name="Dubois E."/>
            <person name="Duesterhoeft A."/>
            <person name="Entian K.-D."/>
            <person name="Floeth M."/>
            <person name="Goffeau A."/>
            <person name="Hebling U."/>
            <person name="Heumann K."/>
            <person name="Heuss-Neitzel D."/>
            <person name="Hilbert H."/>
            <person name="Hilger F."/>
            <person name="Kleine K."/>
            <person name="Koetter P."/>
            <person name="Louis E.J."/>
            <person name="Messenguy F."/>
            <person name="Mewes H.-W."/>
            <person name="Miosga T."/>
            <person name="Moestl D."/>
            <person name="Mueller-Auer S."/>
            <person name="Nentwich U."/>
            <person name="Obermaier B."/>
            <person name="Piravandi E."/>
            <person name="Pohl T.M."/>
            <person name="Portetelle D."/>
            <person name="Purnelle B."/>
            <person name="Rechmann S."/>
            <person name="Rieger M."/>
            <person name="Rinke M."/>
            <person name="Rose M."/>
            <person name="Scharfe M."/>
            <person name="Scherens B."/>
            <person name="Scholler P."/>
            <person name="Schwager C."/>
            <person name="Schwarz S."/>
            <person name="Underwood A.P."/>
            <person name="Urrestarazu L.A."/>
            <person name="Vandenbol M."/>
            <person name="Verhasselt P."/>
            <person name="Vierendeels F."/>
            <person name="Voet M."/>
            <person name="Volckaert G."/>
            <person name="Voss H."/>
            <person name="Wambutt R."/>
            <person name="Wedler E."/>
            <person name="Wedler H."/>
            <person name="Zimmermann F.K."/>
            <person name="Zollner A."/>
            <person name="Hani J."/>
            <person name="Hoheisel J.D."/>
        </authorList>
    </citation>
    <scope>NUCLEOTIDE SEQUENCE [LARGE SCALE GENOMIC DNA]</scope>
    <source>
        <strain>ATCC 204508 / S288c</strain>
    </source>
</reference>
<reference key="2">
    <citation type="journal article" date="2014" name="G3 (Bethesda)">
        <title>The reference genome sequence of Saccharomyces cerevisiae: Then and now.</title>
        <authorList>
            <person name="Engel S.R."/>
            <person name="Dietrich F.S."/>
            <person name="Fisk D.G."/>
            <person name="Binkley G."/>
            <person name="Balakrishnan R."/>
            <person name="Costanzo M.C."/>
            <person name="Dwight S.S."/>
            <person name="Hitz B.C."/>
            <person name="Karra K."/>
            <person name="Nash R.S."/>
            <person name="Weng S."/>
            <person name="Wong E.D."/>
            <person name="Lloyd P."/>
            <person name="Skrzypek M.S."/>
            <person name="Miyasato S.R."/>
            <person name="Simison M."/>
            <person name="Cherry J.M."/>
        </authorList>
    </citation>
    <scope>GENOME REANNOTATION</scope>
    <source>
        <strain>ATCC 204508 / S288c</strain>
    </source>
</reference>
<reference key="3">
    <citation type="journal article" date="2003" name="Nature">
        <title>Global analysis of protein expression in yeast.</title>
        <authorList>
            <person name="Ghaemmaghami S."/>
            <person name="Huh W.-K."/>
            <person name="Bower K."/>
            <person name="Howson R.W."/>
            <person name="Belle A."/>
            <person name="Dephoure N."/>
            <person name="O'Shea E.K."/>
            <person name="Weissman J.S."/>
        </authorList>
    </citation>
    <scope>LEVEL OF PROTEIN EXPRESSION [LARGE SCALE ANALYSIS]</scope>
</reference>
<reference key="4">
    <citation type="journal article" date="2005" name="Yeast">
        <title>New weakly expressed cell cycle-regulated genes in yeast.</title>
        <authorList>
            <person name="de Lichtenberg U."/>
            <person name="Wernersson R."/>
            <person name="Jensen T.S."/>
            <person name="Nielsen H.B."/>
            <person name="Fausboell A."/>
            <person name="Schmidt P."/>
            <person name="Hansen F.B."/>
            <person name="Knudsen S."/>
            <person name="Brunak S."/>
        </authorList>
    </citation>
    <scope>INDUCTION</scope>
</reference>
<reference key="5">
    <citation type="journal article" date="2006" name="Proc. Natl. Acad. Sci. U.S.A.">
        <title>A global topology map of the Saccharomyces cerevisiae membrane proteome.</title>
        <authorList>
            <person name="Kim H."/>
            <person name="Melen K."/>
            <person name="Oesterberg M."/>
            <person name="von Heijne G."/>
        </authorList>
    </citation>
    <scope>TOPOLOGY [LARGE SCALE ANALYSIS]</scope>
    <source>
        <strain>ATCC 208353 / W303-1A</strain>
    </source>
</reference>
<proteinExistence type="evidence at protein level"/>
<comment type="subcellular location">
    <subcellularLocation>
        <location>Membrane</location>
        <topology>Multi-pass membrane protein</topology>
    </subcellularLocation>
</comment>
<comment type="induction">
    <text evidence="4">During S phase of the cell cycle.</text>
</comment>
<comment type="miscellaneous">
    <text evidence="3">Present with 1520 molecules/cell in log phase SD medium.</text>
</comment>
<dbReference type="EMBL" id="U20618">
    <property type="protein sequence ID" value="AAB64523.1"/>
    <property type="molecule type" value="Genomic_DNA"/>
</dbReference>
<dbReference type="EMBL" id="BK006945">
    <property type="protein sequence ID" value="DAA09634.1"/>
    <property type="molecule type" value="Genomic_DNA"/>
</dbReference>
<dbReference type="PIR" id="S53403">
    <property type="entry name" value="S53403"/>
</dbReference>
<dbReference type="RefSeq" id="NP_013430.1">
    <property type="nucleotide sequence ID" value="NM_001182215.1"/>
</dbReference>
<dbReference type="BioGRID" id="31589">
    <property type="interactions" value="30"/>
</dbReference>
<dbReference type="DIP" id="DIP-3995N"/>
<dbReference type="FunCoup" id="Q06170">
    <property type="interactions" value="71"/>
</dbReference>
<dbReference type="IntAct" id="Q06170">
    <property type="interactions" value="12"/>
</dbReference>
<dbReference type="MINT" id="Q06170"/>
<dbReference type="STRING" id="4932.YLR326W"/>
<dbReference type="iPTMnet" id="Q06170"/>
<dbReference type="SwissPalm" id="Q06170"/>
<dbReference type="PaxDb" id="4932-YLR326W"/>
<dbReference type="PeptideAtlas" id="Q06170"/>
<dbReference type="EnsemblFungi" id="YLR326W_mRNA">
    <property type="protein sequence ID" value="YLR326W"/>
    <property type="gene ID" value="YLR326W"/>
</dbReference>
<dbReference type="GeneID" id="851036"/>
<dbReference type="KEGG" id="sce:YLR326W"/>
<dbReference type="AGR" id="SGD:S000004318"/>
<dbReference type="SGD" id="S000004318">
    <property type="gene designation" value="YLR326W"/>
</dbReference>
<dbReference type="VEuPathDB" id="FungiDB:YLR326W"/>
<dbReference type="eggNOG" id="ENOG502RXX6">
    <property type="taxonomic scope" value="Eukaryota"/>
</dbReference>
<dbReference type="HOGENOM" id="CLU_084558_1_0_1"/>
<dbReference type="InParanoid" id="Q06170"/>
<dbReference type="OMA" id="TIGWAPL"/>
<dbReference type="OrthoDB" id="2103474at2759"/>
<dbReference type="BioCyc" id="YEAST:G3O-32409-MONOMER"/>
<dbReference type="BioGRID-ORCS" id="851036">
    <property type="hits" value="2 hits in 10 CRISPR screens"/>
</dbReference>
<dbReference type="PRO" id="PR:Q06170"/>
<dbReference type="Proteomes" id="UP000002311">
    <property type="component" value="Chromosome XII"/>
</dbReference>
<dbReference type="RNAct" id="Q06170">
    <property type="molecule type" value="protein"/>
</dbReference>
<dbReference type="GO" id="GO:0071944">
    <property type="term" value="C:cell periphery"/>
    <property type="evidence" value="ECO:0007005"/>
    <property type="project" value="SGD"/>
</dbReference>
<dbReference type="GO" id="GO:0016020">
    <property type="term" value="C:membrane"/>
    <property type="evidence" value="ECO:0007669"/>
    <property type="project" value="UniProtKB-SubCell"/>
</dbReference>
<dbReference type="InterPro" id="IPR025187">
    <property type="entry name" value="DUF4112"/>
</dbReference>
<dbReference type="PANTHER" id="PTHR35519">
    <property type="entry name" value="MEMBRANE PROTEINS"/>
    <property type="match status" value="1"/>
</dbReference>
<dbReference type="PANTHER" id="PTHR35519:SF1">
    <property type="entry name" value="YALI0C06193P"/>
    <property type="match status" value="1"/>
</dbReference>
<dbReference type="Pfam" id="PF13430">
    <property type="entry name" value="DUF4112"/>
    <property type="match status" value="1"/>
</dbReference>
<protein>
    <recommendedName>
        <fullName>Uncharacterized membrane protein YLR326W</fullName>
    </recommendedName>
</protein>
<organism>
    <name type="scientific">Saccharomyces cerevisiae (strain ATCC 204508 / S288c)</name>
    <name type="common">Baker's yeast</name>
    <dbReference type="NCBI Taxonomy" id="559292"/>
    <lineage>
        <taxon>Eukaryota</taxon>
        <taxon>Fungi</taxon>
        <taxon>Dikarya</taxon>
        <taxon>Ascomycota</taxon>
        <taxon>Saccharomycotina</taxon>
        <taxon>Saccharomycetes</taxon>
        <taxon>Saccharomycetales</taxon>
        <taxon>Saccharomycetaceae</taxon>
        <taxon>Saccharomyces</taxon>
    </lineage>
</organism>
<feature type="chain" id="PRO_0000247210" description="Uncharacterized membrane protein YLR326W">
    <location>
        <begin position="1"/>
        <end position="240"/>
    </location>
</feature>
<feature type="topological domain" description="Cytoplasmic" evidence="1">
    <location>
        <begin position="1"/>
        <end position="85"/>
    </location>
</feature>
<feature type="transmembrane region" description="Helical" evidence="1">
    <location>
        <begin position="86"/>
        <end position="106"/>
    </location>
</feature>
<feature type="topological domain" description="Extracellular" evidence="1">
    <location>
        <begin position="107"/>
        <end position="131"/>
    </location>
</feature>
<feature type="transmembrane region" description="Helical" evidence="1">
    <location>
        <begin position="132"/>
        <end position="152"/>
    </location>
</feature>
<feature type="topological domain" description="Cytoplasmic" evidence="1">
    <location>
        <begin position="153"/>
        <end position="240"/>
    </location>
</feature>
<feature type="region of interest" description="Disordered" evidence="2">
    <location>
        <begin position="181"/>
        <end position="240"/>
    </location>
</feature>
<feature type="compositionally biased region" description="Low complexity" evidence="2">
    <location>
        <begin position="197"/>
        <end position="210"/>
    </location>
</feature>
<accession>Q06170</accession>
<accession>D6VYW8</accession>
<name>YL326_YEAST</name>